<proteinExistence type="inferred from homology"/>
<accession>B1VAM3</accession>
<feature type="chain" id="PRO_1000125981" description="Small ribosomal subunit protein uS7">
    <location>
        <begin position="1"/>
        <end position="156"/>
    </location>
</feature>
<gene>
    <name evidence="1" type="primary">rpsG</name>
    <name type="ordered locus">PA0662</name>
</gene>
<organism>
    <name type="scientific">Phytoplasma australiense</name>
    <dbReference type="NCBI Taxonomy" id="59748"/>
    <lineage>
        <taxon>Bacteria</taxon>
        <taxon>Bacillati</taxon>
        <taxon>Mycoplasmatota</taxon>
        <taxon>Mollicutes</taxon>
        <taxon>Acholeplasmatales</taxon>
        <taxon>Acholeplasmataceae</taxon>
        <taxon>Candidatus Phytoplasma</taxon>
        <taxon>16SrXII (Stolbur group)</taxon>
    </lineage>
</organism>
<name>RS7_PHYAS</name>
<keyword id="KW-1185">Reference proteome</keyword>
<keyword id="KW-0687">Ribonucleoprotein</keyword>
<keyword id="KW-0689">Ribosomal protein</keyword>
<keyword id="KW-0694">RNA-binding</keyword>
<keyword id="KW-0699">rRNA-binding</keyword>
<keyword id="KW-0820">tRNA-binding</keyword>
<evidence type="ECO:0000255" key="1">
    <source>
        <dbReference type="HAMAP-Rule" id="MF_00480"/>
    </source>
</evidence>
<evidence type="ECO:0000305" key="2"/>
<dbReference type="EMBL" id="AM422018">
    <property type="protein sequence ID" value="CAM11996.1"/>
    <property type="molecule type" value="Genomic_DNA"/>
</dbReference>
<dbReference type="SMR" id="B1VAM3"/>
<dbReference type="STRING" id="59748.PA0662"/>
<dbReference type="KEGG" id="pal:PA0662"/>
<dbReference type="eggNOG" id="COG0049">
    <property type="taxonomic scope" value="Bacteria"/>
</dbReference>
<dbReference type="Proteomes" id="UP000008323">
    <property type="component" value="Chromosome"/>
</dbReference>
<dbReference type="GO" id="GO:0015935">
    <property type="term" value="C:small ribosomal subunit"/>
    <property type="evidence" value="ECO:0007669"/>
    <property type="project" value="InterPro"/>
</dbReference>
<dbReference type="GO" id="GO:0019843">
    <property type="term" value="F:rRNA binding"/>
    <property type="evidence" value="ECO:0007669"/>
    <property type="project" value="UniProtKB-UniRule"/>
</dbReference>
<dbReference type="GO" id="GO:0003735">
    <property type="term" value="F:structural constituent of ribosome"/>
    <property type="evidence" value="ECO:0007669"/>
    <property type="project" value="InterPro"/>
</dbReference>
<dbReference type="GO" id="GO:0000049">
    <property type="term" value="F:tRNA binding"/>
    <property type="evidence" value="ECO:0007669"/>
    <property type="project" value="UniProtKB-UniRule"/>
</dbReference>
<dbReference type="GO" id="GO:0006412">
    <property type="term" value="P:translation"/>
    <property type="evidence" value="ECO:0007669"/>
    <property type="project" value="UniProtKB-UniRule"/>
</dbReference>
<dbReference type="CDD" id="cd14869">
    <property type="entry name" value="uS7_Bacteria"/>
    <property type="match status" value="1"/>
</dbReference>
<dbReference type="FunFam" id="1.10.455.10:FF:000001">
    <property type="entry name" value="30S ribosomal protein S7"/>
    <property type="match status" value="1"/>
</dbReference>
<dbReference type="Gene3D" id="1.10.455.10">
    <property type="entry name" value="Ribosomal protein S7 domain"/>
    <property type="match status" value="1"/>
</dbReference>
<dbReference type="HAMAP" id="MF_00480_B">
    <property type="entry name" value="Ribosomal_uS7_B"/>
    <property type="match status" value="1"/>
</dbReference>
<dbReference type="InterPro" id="IPR000235">
    <property type="entry name" value="Ribosomal_uS7"/>
</dbReference>
<dbReference type="InterPro" id="IPR005717">
    <property type="entry name" value="Ribosomal_uS7_bac/org-type"/>
</dbReference>
<dbReference type="InterPro" id="IPR020606">
    <property type="entry name" value="Ribosomal_uS7_CS"/>
</dbReference>
<dbReference type="InterPro" id="IPR023798">
    <property type="entry name" value="Ribosomal_uS7_dom"/>
</dbReference>
<dbReference type="InterPro" id="IPR036823">
    <property type="entry name" value="Ribosomal_uS7_dom_sf"/>
</dbReference>
<dbReference type="NCBIfam" id="TIGR01029">
    <property type="entry name" value="rpsG_bact"/>
    <property type="match status" value="1"/>
</dbReference>
<dbReference type="PANTHER" id="PTHR11205">
    <property type="entry name" value="RIBOSOMAL PROTEIN S7"/>
    <property type="match status" value="1"/>
</dbReference>
<dbReference type="Pfam" id="PF00177">
    <property type="entry name" value="Ribosomal_S7"/>
    <property type="match status" value="1"/>
</dbReference>
<dbReference type="PIRSF" id="PIRSF002122">
    <property type="entry name" value="RPS7p_RPS7a_RPS5e_RPS7o"/>
    <property type="match status" value="1"/>
</dbReference>
<dbReference type="SUPFAM" id="SSF47973">
    <property type="entry name" value="Ribosomal protein S7"/>
    <property type="match status" value="1"/>
</dbReference>
<dbReference type="PROSITE" id="PS00052">
    <property type="entry name" value="RIBOSOMAL_S7"/>
    <property type="match status" value="1"/>
</dbReference>
<protein>
    <recommendedName>
        <fullName evidence="1">Small ribosomal subunit protein uS7</fullName>
    </recommendedName>
    <alternativeName>
        <fullName evidence="2">30S ribosomal protein S7</fullName>
    </alternativeName>
</protein>
<reference key="1">
    <citation type="journal article" date="2008" name="J. Bacteriol.">
        <title>Comparative genome analysis of 'Candidatus Phytoplasma australiense' (subgroup tuf-Australia I; rp-A) and 'Ca. Phytoplasma asteris' strains OY-M and AY-WB.</title>
        <authorList>
            <person name="Tran-Nguyen L.T."/>
            <person name="Kube M."/>
            <person name="Schneider B."/>
            <person name="Reinhardt R."/>
            <person name="Gibb K.S."/>
        </authorList>
    </citation>
    <scope>NUCLEOTIDE SEQUENCE [LARGE SCALE GENOMIC DNA]</scope>
</reference>
<comment type="function">
    <text evidence="1">One of the primary rRNA binding proteins, it binds directly to 16S rRNA where it nucleates assembly of the head domain of the 30S subunit. Is located at the subunit interface close to the decoding center, probably blocks exit of the E-site tRNA.</text>
</comment>
<comment type="subunit">
    <text evidence="1">Part of the 30S ribosomal subunit. Contacts proteins S9 and S11.</text>
</comment>
<comment type="similarity">
    <text evidence="1">Belongs to the universal ribosomal protein uS7 family.</text>
</comment>
<sequence length="156" mass="18159">MSRKGHIKKRDVNPDPIYNSKLVTKVINVIMQDGKKGKAQTIFYQALKKVQLMTKREPLEVFRDALNNIMPVLEVRTRRVGGQNYQVPSEIRPERRQSLGLKWLVKFTKQCNEKTMKDKLAKEIVDASLGHGVSVKKREETHRMAEANKAFAHYRW</sequence>